<proteinExistence type="evidence at transcript level"/>
<sequence>MKERRAPQPVVVRCKLVLVGDVQCGKTAMLQVLAKDCYPETYVPTVFENYTACLETEEQRVELSLWDTSGSPYYDNVRPLCYSDSDAVLLCFDISRPETMDSALKKWRTEILDYCPSTRVLLIGCKTDLRTDLSTLMELSHQKQAPISYEQGCAIAKQLGAEIYLEGSAFTSETSIHSIFRTASMVCLNKSSPVPPKSPVRSLSKRLLHLPSRSELISTTFKKEKAKSCSIM</sequence>
<comment type="function">
    <text evidence="1">Lacks intrinsic GTPase activity. Has a low affinity for GDP, and constitutively binds GTP. Controls rearrangements of the actin cytoskeleton. Induces the Rac-dependent neuritic process formation in part by disruption of the cortical actin filaments. Causes the formation of many neuritic processes from the cell body with disruption of the cortical actin filaments (By similarity).</text>
</comment>
<comment type="subunit">
    <text evidence="1">Binds GRB7 and PLXNB1. Interacts with PLXNA2. Interacts with UBXD5 (By similarity).</text>
</comment>
<comment type="subcellular location">
    <subcellularLocation>
        <location evidence="1">Cell membrane</location>
        <topology evidence="1">Lipid-anchor</topology>
        <orientation evidence="1">Cytoplasmic side</orientation>
    </subcellularLocation>
    <subcellularLocation>
        <location evidence="1">Cytoplasm</location>
        <location evidence="1">Cytoskeleton</location>
    </subcellularLocation>
</comment>
<comment type="alternative products">
    <event type="alternative splicing"/>
    <isoform>
        <id>Q8BLR7-1</id>
        <name>1</name>
        <sequence type="displayed"/>
    </isoform>
    <isoform>
        <id>Q8BLR7-2</id>
        <name>2</name>
        <sequence type="described" ref="VSP_012768"/>
    </isoform>
    <isoform>
        <id>Q8BLR7-3</id>
        <name>3</name>
        <sequence type="described" ref="VSP_012769"/>
    </isoform>
</comment>
<comment type="similarity">
    <text evidence="6">Belongs to the small GTPase superfamily. Rho family.</text>
</comment>
<evidence type="ECO:0000250" key="1"/>
<evidence type="ECO:0000250" key="2">
    <source>
        <dbReference type="UniProtKB" id="Q92730"/>
    </source>
</evidence>
<evidence type="ECO:0000255" key="3"/>
<evidence type="ECO:0000303" key="4">
    <source>
    </source>
</evidence>
<evidence type="ECO:0000303" key="5">
    <source>
    </source>
</evidence>
<evidence type="ECO:0000305" key="6"/>
<feature type="chain" id="PRO_0000198875" description="Rho-related GTP-binding protein Rho6">
    <location>
        <begin position="1"/>
        <end position="229"/>
    </location>
</feature>
<feature type="propeptide" id="PRO_0000281227" description="Removed in mature form" evidence="1">
    <location>
        <begin position="230"/>
        <end position="232"/>
    </location>
</feature>
<feature type="short sequence motif" description="Effector region" evidence="3">
    <location>
        <begin position="42"/>
        <end position="50"/>
    </location>
</feature>
<feature type="binding site" evidence="2">
    <location>
        <begin position="23"/>
        <end position="28"/>
    </location>
    <ligand>
        <name>GTP</name>
        <dbReference type="ChEBI" id="CHEBI:37565"/>
    </ligand>
</feature>
<feature type="binding site" evidence="2">
    <location>
        <begin position="38"/>
        <end position="45"/>
    </location>
    <ligand>
        <name>GTP</name>
        <dbReference type="ChEBI" id="CHEBI:37565"/>
    </ligand>
</feature>
<feature type="binding site" evidence="2">
    <location>
        <begin position="67"/>
        <end position="71"/>
    </location>
    <ligand>
        <name>GTP</name>
        <dbReference type="ChEBI" id="CHEBI:37565"/>
    </ligand>
</feature>
<feature type="binding site" evidence="2">
    <location>
        <begin position="125"/>
        <end position="128"/>
    </location>
    <ligand>
        <name>GTP</name>
        <dbReference type="ChEBI" id="CHEBI:37565"/>
    </ligand>
</feature>
<feature type="binding site" evidence="2">
    <location>
        <begin position="169"/>
        <end position="170"/>
    </location>
    <ligand>
        <name>GTP</name>
        <dbReference type="ChEBI" id="CHEBI:37565"/>
    </ligand>
</feature>
<feature type="modified residue" description="Cysteine methyl ester" evidence="1">
    <location>
        <position position="229"/>
    </location>
</feature>
<feature type="lipid moiety-binding region" description="S-geranylgeranyl cysteine" evidence="1">
    <location>
        <position position="229"/>
    </location>
</feature>
<feature type="splice variant" id="VSP_012768" description="In isoform 2." evidence="5">
    <original>GCAIAKQLGAEIYLEGSAFTSETSIHSIFRTASMVCLNKSSPVPPKSPVRSLSKRLLHLPSRSELISTTFKKEKAKSCSIM</original>
    <variation>RVLTVLFEPKRKEVGLRLEEKFGGLMYGEPEGRHQQ</variation>
    <location>
        <begin position="152"/>
        <end position="232"/>
    </location>
</feature>
<feature type="splice variant" id="VSP_012769" description="In isoform 3." evidence="4">
    <original>GCAIAKQLGAEIYLEGSAFTSETSIHSIFRTASMVCLNKSSPVPPKSPVRSLSKRLLHLPSRSELISTTFKKEKAKSCSIM</original>
    <variation>VCVHVCVCVCVCVCVCV</variation>
    <location>
        <begin position="152"/>
        <end position="232"/>
    </location>
</feature>
<accession>Q8BLR7</accession>
<accession>Q3TSQ9</accession>
<accession>Q80ZR7</accession>
<accession>Q8BYF2</accession>
<keyword id="KW-0025">Alternative splicing</keyword>
<keyword id="KW-1003">Cell membrane</keyword>
<keyword id="KW-0963">Cytoplasm</keyword>
<keyword id="KW-0206">Cytoskeleton</keyword>
<keyword id="KW-0342">GTP-binding</keyword>
<keyword id="KW-0449">Lipoprotein</keyword>
<keyword id="KW-0472">Membrane</keyword>
<keyword id="KW-0488">Methylation</keyword>
<keyword id="KW-0547">Nucleotide-binding</keyword>
<keyword id="KW-0636">Prenylation</keyword>
<keyword id="KW-1185">Reference proteome</keyword>
<gene>
    <name type="primary">Rnd1</name>
    <name type="synonym">Rho6</name>
</gene>
<dbReference type="EMBL" id="AK039992">
    <property type="protein sequence ID" value="BAC30492.1"/>
    <property type="molecule type" value="mRNA"/>
</dbReference>
<dbReference type="EMBL" id="AK043639">
    <property type="protein sequence ID" value="BAC31604.1"/>
    <property type="molecule type" value="mRNA"/>
</dbReference>
<dbReference type="EMBL" id="AK161870">
    <property type="protein sequence ID" value="BAE36616.1"/>
    <property type="molecule type" value="mRNA"/>
</dbReference>
<dbReference type="EMBL" id="BC048531">
    <property type="protein sequence ID" value="AAH48531.1"/>
    <property type="molecule type" value="mRNA"/>
</dbReference>
<dbReference type="CCDS" id="CCDS27801.1">
    <molecule id="Q8BLR7-1"/>
</dbReference>
<dbReference type="RefSeq" id="NP_766200.1">
    <molecule id="Q8BLR7-1"/>
    <property type="nucleotide sequence ID" value="NM_172612.3"/>
</dbReference>
<dbReference type="SMR" id="Q8BLR7"/>
<dbReference type="BioGRID" id="230208">
    <property type="interactions" value="1"/>
</dbReference>
<dbReference type="FunCoup" id="Q8BLR7">
    <property type="interactions" value="883"/>
</dbReference>
<dbReference type="IntAct" id="Q8BLR7">
    <property type="interactions" value="1"/>
</dbReference>
<dbReference type="STRING" id="10090.ENSMUSP00000003451"/>
<dbReference type="iPTMnet" id="Q8BLR7"/>
<dbReference type="PhosphoSitePlus" id="Q8BLR7"/>
<dbReference type="PaxDb" id="10090-ENSMUSP00000003451"/>
<dbReference type="ProteomicsDB" id="301619">
    <molecule id="Q8BLR7-1"/>
</dbReference>
<dbReference type="ProteomicsDB" id="301620">
    <molecule id="Q8BLR7-2"/>
</dbReference>
<dbReference type="ProteomicsDB" id="301621">
    <molecule id="Q8BLR7-3"/>
</dbReference>
<dbReference type="Antibodypedia" id="25722">
    <property type="antibodies" value="148 antibodies from 27 providers"/>
</dbReference>
<dbReference type="DNASU" id="223881"/>
<dbReference type="Ensembl" id="ENSMUST00000003451.11">
    <molecule id="Q8BLR7-1"/>
    <property type="protein sequence ID" value="ENSMUSP00000003451.5"/>
    <property type="gene ID" value="ENSMUSG00000054855.14"/>
</dbReference>
<dbReference type="Ensembl" id="ENSMUST00000109149.9">
    <molecule id="Q8BLR7-2"/>
    <property type="protein sequence ID" value="ENSMUSP00000104777.3"/>
    <property type="gene ID" value="ENSMUSG00000054855.14"/>
</dbReference>
<dbReference type="Ensembl" id="ENSMUST00000120997.2">
    <molecule id="Q8BLR7-3"/>
    <property type="protein sequence ID" value="ENSMUSP00000113830.2"/>
    <property type="gene ID" value="ENSMUSG00000054855.14"/>
</dbReference>
<dbReference type="GeneID" id="223881"/>
<dbReference type="KEGG" id="mmu:223881"/>
<dbReference type="UCSC" id="uc007xnh.1">
    <molecule id="Q8BLR7-2"/>
    <property type="organism name" value="mouse"/>
</dbReference>
<dbReference type="UCSC" id="uc007xni.1">
    <molecule id="Q8BLR7-1"/>
    <property type="organism name" value="mouse"/>
</dbReference>
<dbReference type="UCSC" id="uc007xnj.1">
    <molecule id="Q8BLR7-3"/>
    <property type="organism name" value="mouse"/>
</dbReference>
<dbReference type="AGR" id="MGI:2444878"/>
<dbReference type="CTD" id="27289"/>
<dbReference type="MGI" id="MGI:2444878">
    <property type="gene designation" value="Rnd1"/>
</dbReference>
<dbReference type="VEuPathDB" id="HostDB:ENSMUSG00000054855"/>
<dbReference type="eggNOG" id="KOG0393">
    <property type="taxonomic scope" value="Eukaryota"/>
</dbReference>
<dbReference type="GeneTree" id="ENSGT00940000158666"/>
<dbReference type="HOGENOM" id="CLU_041217_21_1_1"/>
<dbReference type="InParanoid" id="Q8BLR7"/>
<dbReference type="OMA" id="PIVARCK"/>
<dbReference type="OrthoDB" id="8830751at2759"/>
<dbReference type="PhylomeDB" id="Q8BLR7"/>
<dbReference type="TreeFam" id="TF330887"/>
<dbReference type="Reactome" id="R-MMU-416550">
    <property type="pathway name" value="Sema4D mediated inhibition of cell attachment and migration"/>
</dbReference>
<dbReference type="Reactome" id="R-MMU-416572">
    <property type="pathway name" value="Sema4D induced cell migration and growth-cone collapse"/>
</dbReference>
<dbReference type="Reactome" id="R-MMU-9696273">
    <property type="pathway name" value="RND1 GTPase cycle"/>
</dbReference>
<dbReference type="BioGRID-ORCS" id="223881">
    <property type="hits" value="0 hits in 77 CRISPR screens"/>
</dbReference>
<dbReference type="PRO" id="PR:Q8BLR7"/>
<dbReference type="Proteomes" id="UP000000589">
    <property type="component" value="Chromosome 15"/>
</dbReference>
<dbReference type="RNAct" id="Q8BLR7">
    <property type="molecule type" value="protein"/>
</dbReference>
<dbReference type="Bgee" id="ENSMUSG00000054855">
    <property type="expression patterns" value="Expressed in lumbar subsegment of spinal cord and 128 other cell types or tissues"/>
</dbReference>
<dbReference type="GO" id="GO:0015629">
    <property type="term" value="C:actin cytoskeleton"/>
    <property type="evidence" value="ECO:0007669"/>
    <property type="project" value="Ensembl"/>
</dbReference>
<dbReference type="GO" id="GO:0005912">
    <property type="term" value="C:adherens junction"/>
    <property type="evidence" value="ECO:0007669"/>
    <property type="project" value="Ensembl"/>
</dbReference>
<dbReference type="GO" id="GO:0005829">
    <property type="term" value="C:cytosol"/>
    <property type="evidence" value="ECO:0000304"/>
    <property type="project" value="Reactome"/>
</dbReference>
<dbReference type="GO" id="GO:0043231">
    <property type="term" value="C:intracellular membrane-bounded organelle"/>
    <property type="evidence" value="ECO:0007669"/>
    <property type="project" value="Ensembl"/>
</dbReference>
<dbReference type="GO" id="GO:0005886">
    <property type="term" value="C:plasma membrane"/>
    <property type="evidence" value="ECO:0007669"/>
    <property type="project" value="UniProtKB-SubCell"/>
</dbReference>
<dbReference type="GO" id="GO:0005525">
    <property type="term" value="F:GTP binding"/>
    <property type="evidence" value="ECO:0007669"/>
    <property type="project" value="UniProtKB-KW"/>
</dbReference>
<dbReference type="GO" id="GO:0003924">
    <property type="term" value="F:GTPase activity"/>
    <property type="evidence" value="ECO:0007669"/>
    <property type="project" value="InterPro"/>
</dbReference>
<dbReference type="GO" id="GO:0005102">
    <property type="term" value="F:signaling receptor binding"/>
    <property type="evidence" value="ECO:0007669"/>
    <property type="project" value="Ensembl"/>
</dbReference>
<dbReference type="GO" id="GO:0007015">
    <property type="term" value="P:actin filament organization"/>
    <property type="evidence" value="ECO:0007669"/>
    <property type="project" value="Ensembl"/>
</dbReference>
<dbReference type="GO" id="GO:0007162">
    <property type="term" value="P:negative regulation of cell adhesion"/>
    <property type="evidence" value="ECO:0007669"/>
    <property type="project" value="Ensembl"/>
</dbReference>
<dbReference type="GO" id="GO:0016322">
    <property type="term" value="P:neuron remodeling"/>
    <property type="evidence" value="ECO:0007669"/>
    <property type="project" value="Ensembl"/>
</dbReference>
<dbReference type="GO" id="GO:0007264">
    <property type="term" value="P:small GTPase-mediated signal transduction"/>
    <property type="evidence" value="ECO:0007669"/>
    <property type="project" value="InterPro"/>
</dbReference>
<dbReference type="FunFam" id="3.40.50.300:FF:000569">
    <property type="entry name" value="Rho-related GTP-binding protein Rho6"/>
    <property type="match status" value="1"/>
</dbReference>
<dbReference type="Gene3D" id="3.40.50.300">
    <property type="entry name" value="P-loop containing nucleotide triphosphate hydrolases"/>
    <property type="match status" value="1"/>
</dbReference>
<dbReference type="InterPro" id="IPR027417">
    <property type="entry name" value="P-loop_NTPase"/>
</dbReference>
<dbReference type="InterPro" id="IPR005225">
    <property type="entry name" value="Small_GTP-bd"/>
</dbReference>
<dbReference type="InterPro" id="IPR001806">
    <property type="entry name" value="Small_GTPase"/>
</dbReference>
<dbReference type="InterPro" id="IPR003578">
    <property type="entry name" value="Small_GTPase_Rho"/>
</dbReference>
<dbReference type="NCBIfam" id="TIGR00231">
    <property type="entry name" value="small_GTP"/>
    <property type="match status" value="1"/>
</dbReference>
<dbReference type="PANTHER" id="PTHR24072">
    <property type="entry name" value="RHO FAMILY GTPASE"/>
    <property type="match status" value="1"/>
</dbReference>
<dbReference type="Pfam" id="PF00071">
    <property type="entry name" value="Ras"/>
    <property type="match status" value="1"/>
</dbReference>
<dbReference type="PRINTS" id="PR00449">
    <property type="entry name" value="RASTRNSFRMNG"/>
</dbReference>
<dbReference type="SMART" id="SM00175">
    <property type="entry name" value="RAB"/>
    <property type="match status" value="1"/>
</dbReference>
<dbReference type="SMART" id="SM00173">
    <property type="entry name" value="RAS"/>
    <property type="match status" value="1"/>
</dbReference>
<dbReference type="SMART" id="SM00174">
    <property type="entry name" value="RHO"/>
    <property type="match status" value="1"/>
</dbReference>
<dbReference type="SUPFAM" id="SSF52540">
    <property type="entry name" value="P-loop containing nucleoside triphosphate hydrolases"/>
    <property type="match status" value="1"/>
</dbReference>
<dbReference type="PROSITE" id="PS51420">
    <property type="entry name" value="RHO"/>
    <property type="match status" value="1"/>
</dbReference>
<name>RND1_MOUSE</name>
<reference key="1">
    <citation type="journal article" date="2005" name="Science">
        <title>The transcriptional landscape of the mammalian genome.</title>
        <authorList>
            <person name="Carninci P."/>
            <person name="Kasukawa T."/>
            <person name="Katayama S."/>
            <person name="Gough J."/>
            <person name="Frith M.C."/>
            <person name="Maeda N."/>
            <person name="Oyama R."/>
            <person name="Ravasi T."/>
            <person name="Lenhard B."/>
            <person name="Wells C."/>
            <person name="Kodzius R."/>
            <person name="Shimokawa K."/>
            <person name="Bajic V.B."/>
            <person name="Brenner S.E."/>
            <person name="Batalov S."/>
            <person name="Forrest A.R."/>
            <person name="Zavolan M."/>
            <person name="Davis M.J."/>
            <person name="Wilming L.G."/>
            <person name="Aidinis V."/>
            <person name="Allen J.E."/>
            <person name="Ambesi-Impiombato A."/>
            <person name="Apweiler R."/>
            <person name="Aturaliya R.N."/>
            <person name="Bailey T.L."/>
            <person name="Bansal M."/>
            <person name="Baxter L."/>
            <person name="Beisel K.W."/>
            <person name="Bersano T."/>
            <person name="Bono H."/>
            <person name="Chalk A.M."/>
            <person name="Chiu K.P."/>
            <person name="Choudhary V."/>
            <person name="Christoffels A."/>
            <person name="Clutterbuck D.R."/>
            <person name="Crowe M.L."/>
            <person name="Dalla E."/>
            <person name="Dalrymple B.P."/>
            <person name="de Bono B."/>
            <person name="Della Gatta G."/>
            <person name="di Bernardo D."/>
            <person name="Down T."/>
            <person name="Engstrom P."/>
            <person name="Fagiolini M."/>
            <person name="Faulkner G."/>
            <person name="Fletcher C.F."/>
            <person name="Fukushima T."/>
            <person name="Furuno M."/>
            <person name="Futaki S."/>
            <person name="Gariboldi M."/>
            <person name="Georgii-Hemming P."/>
            <person name="Gingeras T.R."/>
            <person name="Gojobori T."/>
            <person name="Green R.E."/>
            <person name="Gustincich S."/>
            <person name="Harbers M."/>
            <person name="Hayashi Y."/>
            <person name="Hensch T.K."/>
            <person name="Hirokawa N."/>
            <person name="Hill D."/>
            <person name="Huminiecki L."/>
            <person name="Iacono M."/>
            <person name="Ikeo K."/>
            <person name="Iwama A."/>
            <person name="Ishikawa T."/>
            <person name="Jakt M."/>
            <person name="Kanapin A."/>
            <person name="Katoh M."/>
            <person name="Kawasawa Y."/>
            <person name="Kelso J."/>
            <person name="Kitamura H."/>
            <person name="Kitano H."/>
            <person name="Kollias G."/>
            <person name="Krishnan S.P."/>
            <person name="Kruger A."/>
            <person name="Kummerfeld S.K."/>
            <person name="Kurochkin I.V."/>
            <person name="Lareau L.F."/>
            <person name="Lazarevic D."/>
            <person name="Lipovich L."/>
            <person name="Liu J."/>
            <person name="Liuni S."/>
            <person name="McWilliam S."/>
            <person name="Madan Babu M."/>
            <person name="Madera M."/>
            <person name="Marchionni L."/>
            <person name="Matsuda H."/>
            <person name="Matsuzawa S."/>
            <person name="Miki H."/>
            <person name="Mignone F."/>
            <person name="Miyake S."/>
            <person name="Morris K."/>
            <person name="Mottagui-Tabar S."/>
            <person name="Mulder N."/>
            <person name="Nakano N."/>
            <person name="Nakauchi H."/>
            <person name="Ng P."/>
            <person name="Nilsson R."/>
            <person name="Nishiguchi S."/>
            <person name="Nishikawa S."/>
            <person name="Nori F."/>
            <person name="Ohara O."/>
            <person name="Okazaki Y."/>
            <person name="Orlando V."/>
            <person name="Pang K.C."/>
            <person name="Pavan W.J."/>
            <person name="Pavesi G."/>
            <person name="Pesole G."/>
            <person name="Petrovsky N."/>
            <person name="Piazza S."/>
            <person name="Reed J."/>
            <person name="Reid J.F."/>
            <person name="Ring B.Z."/>
            <person name="Ringwald M."/>
            <person name="Rost B."/>
            <person name="Ruan Y."/>
            <person name="Salzberg S.L."/>
            <person name="Sandelin A."/>
            <person name="Schneider C."/>
            <person name="Schoenbach C."/>
            <person name="Sekiguchi K."/>
            <person name="Semple C.A."/>
            <person name="Seno S."/>
            <person name="Sessa L."/>
            <person name="Sheng Y."/>
            <person name="Shibata Y."/>
            <person name="Shimada H."/>
            <person name="Shimada K."/>
            <person name="Silva D."/>
            <person name="Sinclair B."/>
            <person name="Sperling S."/>
            <person name="Stupka E."/>
            <person name="Sugiura K."/>
            <person name="Sultana R."/>
            <person name="Takenaka Y."/>
            <person name="Taki K."/>
            <person name="Tammoja K."/>
            <person name="Tan S.L."/>
            <person name="Tang S."/>
            <person name="Taylor M.S."/>
            <person name="Tegner J."/>
            <person name="Teichmann S.A."/>
            <person name="Ueda H.R."/>
            <person name="van Nimwegen E."/>
            <person name="Verardo R."/>
            <person name="Wei C.L."/>
            <person name="Yagi K."/>
            <person name="Yamanishi H."/>
            <person name="Zabarovsky E."/>
            <person name="Zhu S."/>
            <person name="Zimmer A."/>
            <person name="Hide W."/>
            <person name="Bult C."/>
            <person name="Grimmond S.M."/>
            <person name="Teasdale R.D."/>
            <person name="Liu E.T."/>
            <person name="Brusic V."/>
            <person name="Quackenbush J."/>
            <person name="Wahlestedt C."/>
            <person name="Mattick J.S."/>
            <person name="Hume D.A."/>
            <person name="Kai C."/>
            <person name="Sasaki D."/>
            <person name="Tomaru Y."/>
            <person name="Fukuda S."/>
            <person name="Kanamori-Katayama M."/>
            <person name="Suzuki M."/>
            <person name="Aoki J."/>
            <person name="Arakawa T."/>
            <person name="Iida J."/>
            <person name="Imamura K."/>
            <person name="Itoh M."/>
            <person name="Kato T."/>
            <person name="Kawaji H."/>
            <person name="Kawagashira N."/>
            <person name="Kawashima T."/>
            <person name="Kojima M."/>
            <person name="Kondo S."/>
            <person name="Konno H."/>
            <person name="Nakano K."/>
            <person name="Ninomiya N."/>
            <person name="Nishio T."/>
            <person name="Okada M."/>
            <person name="Plessy C."/>
            <person name="Shibata K."/>
            <person name="Shiraki T."/>
            <person name="Suzuki S."/>
            <person name="Tagami M."/>
            <person name="Waki K."/>
            <person name="Watahiki A."/>
            <person name="Okamura-Oho Y."/>
            <person name="Suzuki H."/>
            <person name="Kawai J."/>
            <person name="Hayashizaki Y."/>
        </authorList>
    </citation>
    <scope>NUCLEOTIDE SEQUENCE [LARGE SCALE MRNA] (ISOFORMS 1 AND 2)</scope>
    <source>
        <strain>C57BL/6J</strain>
        <tissue>Brain cortex</tissue>
        <tissue>Medulla oblongata</tissue>
        <tissue>Thymus</tissue>
    </source>
</reference>
<reference key="2">
    <citation type="journal article" date="2004" name="Genome Res.">
        <title>The status, quality, and expansion of the NIH full-length cDNA project: the Mammalian Gene Collection (MGC).</title>
        <authorList>
            <consortium name="The MGC Project Team"/>
        </authorList>
    </citation>
    <scope>NUCLEOTIDE SEQUENCE [LARGE SCALE MRNA] (ISOFORM 3)</scope>
    <source>
        <tissue>Brain</tissue>
    </source>
</reference>
<organism>
    <name type="scientific">Mus musculus</name>
    <name type="common">Mouse</name>
    <dbReference type="NCBI Taxonomy" id="10090"/>
    <lineage>
        <taxon>Eukaryota</taxon>
        <taxon>Metazoa</taxon>
        <taxon>Chordata</taxon>
        <taxon>Craniata</taxon>
        <taxon>Vertebrata</taxon>
        <taxon>Euteleostomi</taxon>
        <taxon>Mammalia</taxon>
        <taxon>Eutheria</taxon>
        <taxon>Euarchontoglires</taxon>
        <taxon>Glires</taxon>
        <taxon>Rodentia</taxon>
        <taxon>Myomorpha</taxon>
        <taxon>Muroidea</taxon>
        <taxon>Muridae</taxon>
        <taxon>Murinae</taxon>
        <taxon>Mus</taxon>
        <taxon>Mus</taxon>
    </lineage>
</organism>
<protein>
    <recommendedName>
        <fullName>Rho-related GTP-binding protein Rho6</fullName>
    </recommendedName>
    <alternativeName>
        <fullName>Rho family GTPase 1</fullName>
    </alternativeName>
    <alternativeName>
        <fullName>Rnd1</fullName>
    </alternativeName>
</protein>